<gene>
    <name evidence="4" type="primary">RNF32-DT</name>
    <name evidence="4" type="synonym">C7orf13</name>
    <name evidence="4" type="synonym">LINC01006</name>
    <name type="synonym">MY040</name>
</gene>
<feature type="chain" id="PRO_0000248511" description="Putative transmembrane protein RNF32-DT">
    <location>
        <begin position="1"/>
        <end position="216"/>
    </location>
</feature>
<feature type="transmembrane region" description="Helical" evidence="1">
    <location>
        <begin position="177"/>
        <end position="197"/>
    </location>
</feature>
<keyword id="KW-0963">Cytoplasm</keyword>
<keyword id="KW-0472">Membrane</keyword>
<keyword id="KW-1185">Reference proteome</keyword>
<keyword id="KW-0812">Transmembrane</keyword>
<keyword id="KW-1133">Transmembrane helix</keyword>
<sequence>MLASPARPTLRMLANHALSTPHCACSPAPAPRTASASRRRCVPVEARAAGVFGDRLAGVFGSRGLKHGGVQAPRPRVVRAEPRAGFAVVRSPRRLCGRSHAPQPPAHLGLGPGCFPAVAVVVPVPGSRAHRPFAALLVEGSFLGDPPIPPRRSGVLARGSAGADCLASSVTPGPSLWIPLLLVAGCVSCFVGLAVCVWMQARVSPAWPAGLFLLPR</sequence>
<reference key="1">
    <citation type="journal article" date="2002" name="Biochem. Biophys. Res. Commun.">
        <title>A double RING-H2 domain in RNF32, a gene expressed during sperm formation.</title>
        <authorList>
            <person name="van Baren M.J."/>
            <person name="van der Linde H.C."/>
            <person name="Breedveld G.J."/>
            <person name="Baarends W.M."/>
            <person name="Rizzu P."/>
            <person name="de Graaff E."/>
            <person name="Oostra B.A."/>
            <person name="Heutink P."/>
        </authorList>
    </citation>
    <scope>NUCLEOTIDE SEQUENCE [MRNA]</scope>
    <scope>SUBCELLULAR LOCATION</scope>
    <scope>TISSUE SPECIFICITY</scope>
</reference>
<proteinExistence type="uncertain"/>
<name>R32DT_HUMAN</name>
<comment type="subcellular location">
    <subcellularLocation>
        <location evidence="2">Cytoplasm</location>
    </subcellularLocation>
    <subcellularLocation>
        <location evidence="1">Membrane</location>
        <topology evidence="1">Single-pass membrane protein</topology>
    </subcellularLocation>
</comment>
<comment type="tissue specificity">
    <text evidence="2">Expressed only in testis.</text>
</comment>
<comment type="caution">
    <text evidence="3">Product of a dubious CDS prediction. May be a non-coding RNA.</text>
</comment>
<protein>
    <recommendedName>
        <fullName evidence="3">Putative transmembrane protein RNF32-DT</fullName>
    </recommendedName>
    <alternativeName>
        <fullName evidence="4">RNF32 divergent transcript</fullName>
    </alternativeName>
</protein>
<accession>Q8NI28</accession>
<dbReference type="EMBL" id="AF439977">
    <property type="protein sequence ID" value="AAM33252.1"/>
    <property type="molecule type" value="mRNA"/>
</dbReference>
<dbReference type="IntAct" id="Q8NI28">
    <property type="interactions" value="1"/>
</dbReference>
<dbReference type="MINT" id="Q8NI28"/>
<dbReference type="GlyGen" id="Q8NI28">
    <property type="glycosylation" value="1 site"/>
</dbReference>
<dbReference type="iPTMnet" id="Q8NI28"/>
<dbReference type="PhosphoSitePlus" id="Q8NI28"/>
<dbReference type="BioMuta" id="HGNC:48971"/>
<dbReference type="DMDM" id="74715710"/>
<dbReference type="MassIVE" id="Q8NI28"/>
<dbReference type="ProteomicsDB" id="73818"/>
<dbReference type="AGR" id="HGNC:48971"/>
<dbReference type="GeneCards" id="RNF32-DT"/>
<dbReference type="HGNC" id="HGNC:48971">
    <property type="gene designation" value="RNF32-DT"/>
</dbReference>
<dbReference type="MIM" id="610242">
    <property type="type" value="gene"/>
</dbReference>
<dbReference type="neXtProt" id="NX_Q8NI28"/>
<dbReference type="InParanoid" id="Q8NI28"/>
<dbReference type="PAN-GO" id="Q8NI28">
    <property type="GO annotations" value="0 GO annotations based on evolutionary models"/>
</dbReference>
<dbReference type="PathwayCommons" id="Q8NI28"/>
<dbReference type="SignaLink" id="Q8NI28"/>
<dbReference type="ChiTaRS" id="LINC01006">
    <property type="organism name" value="human"/>
</dbReference>
<dbReference type="Pharos" id="Q8NI28">
    <property type="development level" value="Tdark"/>
</dbReference>
<dbReference type="Proteomes" id="UP000005640">
    <property type="component" value="Unplaced"/>
</dbReference>
<dbReference type="RNAct" id="Q8NI28">
    <property type="molecule type" value="protein"/>
</dbReference>
<dbReference type="GO" id="GO:0005737">
    <property type="term" value="C:cytoplasm"/>
    <property type="evidence" value="ECO:0007669"/>
    <property type="project" value="UniProtKB-SubCell"/>
</dbReference>
<dbReference type="GO" id="GO:0016020">
    <property type="term" value="C:membrane"/>
    <property type="evidence" value="ECO:0007669"/>
    <property type="project" value="UniProtKB-SubCell"/>
</dbReference>
<evidence type="ECO:0000255" key="1"/>
<evidence type="ECO:0000269" key="2">
    <source>
    </source>
</evidence>
<evidence type="ECO:0000305" key="3"/>
<evidence type="ECO:0000312" key="4">
    <source>
        <dbReference type="HGNC" id="HGNC:48971"/>
    </source>
</evidence>
<organism>
    <name type="scientific">Homo sapiens</name>
    <name type="common">Human</name>
    <dbReference type="NCBI Taxonomy" id="9606"/>
    <lineage>
        <taxon>Eukaryota</taxon>
        <taxon>Metazoa</taxon>
        <taxon>Chordata</taxon>
        <taxon>Craniata</taxon>
        <taxon>Vertebrata</taxon>
        <taxon>Euteleostomi</taxon>
        <taxon>Mammalia</taxon>
        <taxon>Eutheria</taxon>
        <taxon>Euarchontoglires</taxon>
        <taxon>Primates</taxon>
        <taxon>Haplorrhini</taxon>
        <taxon>Catarrhini</taxon>
        <taxon>Hominidae</taxon>
        <taxon>Homo</taxon>
    </lineage>
</organism>